<comment type="function">
    <text evidence="1">Gustducin-coupled receptor implicated in the perception of bitter compounds in the oral cavity and the gastrointestinal tract. Signals through PLCB2 and the calcium-regulated cation channel TRPM5 (By similarity).</text>
</comment>
<comment type="subcellular location">
    <subcellularLocation>
        <location>Membrane</location>
        <topology>Multi-pass membrane protein</topology>
    </subcellularLocation>
</comment>
<comment type="tissue specificity">
    <text>Expressed in subsets of taste receptor cells of the tongue and palate epithelium and exclusively in gustducin-positive cells.</text>
</comment>
<comment type="miscellaneous">
    <text>Several bitter taste receptors are expressed in a single taste receptor cell.</text>
</comment>
<comment type="similarity">
    <text evidence="5">Belongs to the G-protein coupled receptor T2R family.</text>
</comment>
<dbReference type="EMBL" id="AF227135">
    <property type="protein sequence ID" value="AAF43908.1"/>
    <property type="molecule type" value="Genomic_DNA"/>
</dbReference>
<dbReference type="EMBL" id="AY724954">
    <property type="protein sequence ID" value="AAU21150.1"/>
    <property type="molecule type" value="Genomic_DNA"/>
</dbReference>
<dbReference type="EMBL" id="BC069066">
    <property type="protein sequence ID" value="AAH69066.1"/>
    <property type="molecule type" value="mRNA"/>
</dbReference>
<dbReference type="EMBL" id="BC095519">
    <property type="protein sequence ID" value="AAH95519.1"/>
    <property type="molecule type" value="mRNA"/>
</dbReference>
<dbReference type="EMBL" id="AB199063">
    <property type="protein sequence ID" value="BAD97966.1"/>
    <property type="molecule type" value="Genomic_DNA"/>
</dbReference>
<dbReference type="EMBL" id="AB199064">
    <property type="protein sequence ID" value="BAD97967.1"/>
    <property type="molecule type" value="Genomic_DNA"/>
</dbReference>
<dbReference type="EMBL" id="AB199065">
    <property type="protein sequence ID" value="BAD97968.1"/>
    <property type="molecule type" value="Genomic_DNA"/>
</dbReference>
<dbReference type="CCDS" id="CCDS8633.1"/>
<dbReference type="RefSeq" id="NP_076406.1">
    <property type="nucleotide sequence ID" value="NM_023917.2"/>
</dbReference>
<dbReference type="SMR" id="Q9NYW1"/>
<dbReference type="FunCoup" id="Q9NYW1">
    <property type="interactions" value="215"/>
</dbReference>
<dbReference type="STRING" id="9606.ENSP00000240691"/>
<dbReference type="BindingDB" id="Q9NYW1"/>
<dbReference type="ChEMBL" id="CHEMBL3309110"/>
<dbReference type="DrugCentral" id="Q9NYW1"/>
<dbReference type="GuidetoPHARMACOLOGY" id="665"/>
<dbReference type="GlyCosmos" id="Q9NYW1">
    <property type="glycosylation" value="1 site, No reported glycans"/>
</dbReference>
<dbReference type="GlyGen" id="Q9NYW1">
    <property type="glycosylation" value="1 site"/>
</dbReference>
<dbReference type="iPTMnet" id="Q9NYW1"/>
<dbReference type="PhosphoSitePlus" id="Q9NYW1"/>
<dbReference type="BioMuta" id="TAS2R9"/>
<dbReference type="DMDM" id="29839661"/>
<dbReference type="PaxDb" id="9606-ENSP00000240691"/>
<dbReference type="Antibodypedia" id="23398">
    <property type="antibodies" value="101 antibodies from 19 providers"/>
</dbReference>
<dbReference type="DNASU" id="50835"/>
<dbReference type="Ensembl" id="ENST00000240691.4">
    <property type="protein sequence ID" value="ENSP00000240691.2"/>
    <property type="gene ID" value="ENSG00000121381.4"/>
</dbReference>
<dbReference type="Ensembl" id="ENST00000573524.1">
    <property type="protein sequence ID" value="ENSP00000460247.1"/>
    <property type="gene ID" value="ENSG00000273086.1"/>
</dbReference>
<dbReference type="Ensembl" id="ENST00000616297.2">
    <property type="protein sequence ID" value="ENSP00000480069.1"/>
    <property type="gene ID" value="ENSG00000273713.2"/>
</dbReference>
<dbReference type="GeneID" id="50835"/>
<dbReference type="KEGG" id="hsa:50835"/>
<dbReference type="MANE-Select" id="ENST00000240691.4">
    <property type="protein sequence ID" value="ENSP00000240691.2"/>
    <property type="RefSeq nucleotide sequence ID" value="NM_023917.2"/>
    <property type="RefSeq protein sequence ID" value="NP_076406.1"/>
</dbReference>
<dbReference type="UCSC" id="uc001qyx.4">
    <property type="organism name" value="human"/>
</dbReference>
<dbReference type="AGR" id="HGNC:14917"/>
<dbReference type="CTD" id="50835"/>
<dbReference type="GeneCards" id="TAS2R9"/>
<dbReference type="HGNC" id="HGNC:14917">
    <property type="gene designation" value="TAS2R9"/>
</dbReference>
<dbReference type="HPA" id="ENSG00000121381">
    <property type="expression patterns" value="Not detected"/>
</dbReference>
<dbReference type="MIM" id="604795">
    <property type="type" value="gene"/>
</dbReference>
<dbReference type="neXtProt" id="NX_Q9NYW1"/>
<dbReference type="OpenTargets" id="ENSG00000121381"/>
<dbReference type="PharmGKB" id="PA37927"/>
<dbReference type="VEuPathDB" id="HostDB:ENSG00000121381"/>
<dbReference type="eggNOG" id="ENOG502SY8P">
    <property type="taxonomic scope" value="Eukaryota"/>
</dbReference>
<dbReference type="GeneTree" id="ENSGT01100000263477"/>
<dbReference type="HOGENOM" id="CLU_072337_3_0_1"/>
<dbReference type="InParanoid" id="Q9NYW1"/>
<dbReference type="OMA" id="TIGIWGN"/>
<dbReference type="OrthoDB" id="8876749at2759"/>
<dbReference type="PAN-GO" id="Q9NYW1">
    <property type="GO annotations" value="3 GO annotations based on evolutionary models"/>
</dbReference>
<dbReference type="PhylomeDB" id="Q9NYW1"/>
<dbReference type="TreeFam" id="TF335891"/>
<dbReference type="PathwayCommons" id="Q9NYW1"/>
<dbReference type="Reactome" id="R-HSA-418594">
    <property type="pathway name" value="G alpha (i) signalling events"/>
</dbReference>
<dbReference type="Reactome" id="R-HSA-420499">
    <property type="pathway name" value="Class C/3 (Metabotropic glutamate/pheromone receptors)"/>
</dbReference>
<dbReference type="BioGRID-ORCS" id="50835">
    <property type="hits" value="12 hits in 1140 CRISPR screens"/>
</dbReference>
<dbReference type="GeneWiki" id="TAS2R9"/>
<dbReference type="GenomeRNAi" id="50835"/>
<dbReference type="Pharos" id="Q9NYW1">
    <property type="development level" value="Tchem"/>
</dbReference>
<dbReference type="PRO" id="PR:Q9NYW1"/>
<dbReference type="Proteomes" id="UP000005640">
    <property type="component" value="Chromosome 12"/>
</dbReference>
<dbReference type="RNAct" id="Q9NYW1">
    <property type="molecule type" value="protein"/>
</dbReference>
<dbReference type="Bgee" id="ENSG00000121381">
    <property type="expression patterns" value="Expressed in primordial germ cell in gonad and 4 other cell types or tissues"/>
</dbReference>
<dbReference type="GO" id="GO:0016020">
    <property type="term" value="C:membrane"/>
    <property type="evidence" value="ECO:0000318"/>
    <property type="project" value="GO_Central"/>
</dbReference>
<dbReference type="GO" id="GO:0005886">
    <property type="term" value="C:plasma membrane"/>
    <property type="evidence" value="ECO:0000304"/>
    <property type="project" value="Reactome"/>
</dbReference>
<dbReference type="GO" id="GO:0033038">
    <property type="term" value="F:bitter taste receptor activity"/>
    <property type="evidence" value="ECO:0000318"/>
    <property type="project" value="GO_Central"/>
</dbReference>
<dbReference type="GO" id="GO:0004930">
    <property type="term" value="F:G protein-coupled receptor activity"/>
    <property type="evidence" value="ECO:0007669"/>
    <property type="project" value="UniProtKB-KW"/>
</dbReference>
<dbReference type="GO" id="GO:0008527">
    <property type="term" value="F:taste receptor activity"/>
    <property type="evidence" value="ECO:0000304"/>
    <property type="project" value="UniProtKB"/>
</dbReference>
<dbReference type="GO" id="GO:0001580">
    <property type="term" value="P:detection of chemical stimulus involved in sensory perception of bitter taste"/>
    <property type="evidence" value="ECO:0000318"/>
    <property type="project" value="GO_Central"/>
</dbReference>
<dbReference type="CDD" id="cd15023">
    <property type="entry name" value="7tm_TAS2R7-like"/>
    <property type="match status" value="1"/>
</dbReference>
<dbReference type="FunFam" id="1.20.1070.10:FF:000042">
    <property type="entry name" value="Taste receptor type 2 member 7"/>
    <property type="match status" value="1"/>
</dbReference>
<dbReference type="Gene3D" id="1.20.1070.10">
    <property type="entry name" value="Rhodopsin 7-helix transmembrane proteins"/>
    <property type="match status" value="1"/>
</dbReference>
<dbReference type="InterPro" id="IPR017452">
    <property type="entry name" value="GPCR_Rhodpsn_7TM"/>
</dbReference>
<dbReference type="InterPro" id="IPR007960">
    <property type="entry name" value="TAS2R"/>
</dbReference>
<dbReference type="PANTHER" id="PTHR11394">
    <property type="entry name" value="TASTE RECEPTOR TYPE 2"/>
    <property type="match status" value="1"/>
</dbReference>
<dbReference type="PANTHER" id="PTHR11394:SF29">
    <property type="entry name" value="TASTE RECEPTOR TYPE 2 MEMBER 9"/>
    <property type="match status" value="1"/>
</dbReference>
<dbReference type="Pfam" id="PF05296">
    <property type="entry name" value="TAS2R"/>
    <property type="match status" value="1"/>
</dbReference>
<dbReference type="SUPFAM" id="SSF81321">
    <property type="entry name" value="Family A G protein-coupled receptor-like"/>
    <property type="match status" value="1"/>
</dbReference>
<dbReference type="PROSITE" id="PS50262">
    <property type="entry name" value="G_PROTEIN_RECEP_F1_2"/>
    <property type="match status" value="1"/>
</dbReference>
<organism>
    <name type="scientific">Homo sapiens</name>
    <name type="common">Human</name>
    <dbReference type="NCBI Taxonomy" id="9606"/>
    <lineage>
        <taxon>Eukaryota</taxon>
        <taxon>Metazoa</taxon>
        <taxon>Chordata</taxon>
        <taxon>Craniata</taxon>
        <taxon>Vertebrata</taxon>
        <taxon>Euteleostomi</taxon>
        <taxon>Mammalia</taxon>
        <taxon>Eutheria</taxon>
        <taxon>Euarchontoglires</taxon>
        <taxon>Primates</taxon>
        <taxon>Haplorrhini</taxon>
        <taxon>Catarrhini</taxon>
        <taxon>Hominidae</taxon>
        <taxon>Homo</taxon>
    </lineage>
</organism>
<evidence type="ECO:0000250" key="1"/>
<evidence type="ECO:0000255" key="2"/>
<evidence type="ECO:0000269" key="3">
    <source>
    </source>
</evidence>
<evidence type="ECO:0000269" key="4">
    <source>
    </source>
</evidence>
<evidence type="ECO:0000305" key="5"/>
<name>TA2R9_HUMAN</name>
<accession>Q9NYW1</accession>
<accession>Q502V7</accession>
<accession>Q50KT0</accession>
<accession>Q50KT1</accession>
<accession>Q645W9</accession>
<gene>
    <name type="primary">TAS2R9</name>
</gene>
<reference key="1">
    <citation type="journal article" date="2000" name="Cell">
        <title>A novel family of mammalian taste receptors.</title>
        <authorList>
            <person name="Adler E."/>
            <person name="Hoon M.A."/>
            <person name="Mueller K.L."/>
            <person name="Chandrashekar J."/>
            <person name="Ryba N.J.P."/>
            <person name="Zuker C.S."/>
        </authorList>
    </citation>
    <scope>NUCLEOTIDE SEQUENCE [GENOMIC DNA]</scope>
    <scope>TOPOLOGY</scope>
</reference>
<reference key="2">
    <citation type="journal article" date="2005" name="Mol. Biol. Evol.">
        <title>Evolution of bitter taste receptors in humans and apes.</title>
        <authorList>
            <person name="Fischer A."/>
            <person name="Gilad Y."/>
            <person name="Man O."/>
            <person name="Paeaebo S."/>
        </authorList>
    </citation>
    <scope>NUCLEOTIDE SEQUENCE [GENOMIC DNA]</scope>
</reference>
<reference key="3">
    <citation type="journal article" date="2004" name="Genome Res.">
        <title>The status, quality, and expansion of the NIH full-length cDNA project: the Mammalian Gene Collection (MGC).</title>
        <authorList>
            <consortium name="The MGC Project Team"/>
        </authorList>
    </citation>
    <scope>NUCLEOTIDE SEQUENCE [LARGE SCALE MRNA]</scope>
    <scope>VARIANT ALA-187</scope>
</reference>
<reference key="4">
    <citation type="journal article" date="2005" name="Genetics">
        <title>Lineage-specific loss of function of bitter taste receptor genes in humans and nonhuman primates.</title>
        <authorList>
            <person name="Go Y."/>
            <person name="Satta Y."/>
            <person name="Takenaka O."/>
            <person name="Takahata N."/>
        </authorList>
    </citation>
    <scope>NUCLEOTIDE SEQUENCE [GENOMIC DNA] OF 9-298</scope>
    <scope>VARIANT ALA-187</scope>
</reference>
<reference key="5">
    <citation type="journal article" date="2000" name="Cell">
        <title>T2Rs function as bitter taste receptors.</title>
        <authorList>
            <person name="Chandrashekar J."/>
            <person name="Mueller K.L."/>
            <person name="Hoon M.A."/>
            <person name="Adler E."/>
            <person name="Feng L."/>
            <person name="Guo W."/>
            <person name="Zuker C.S."/>
            <person name="Ryba N.J.P."/>
        </authorList>
    </citation>
    <scope>CHARACTERIZATION</scope>
</reference>
<reference key="6">
    <citation type="journal article" date="2002" name="Curr. Opin. Neurobiol.">
        <title>Receptors for bitter and sweet taste.</title>
        <authorList>
            <person name="Montmayeur J.-P."/>
            <person name="Matsunami H."/>
        </authorList>
    </citation>
    <scope>REVIEW</scope>
</reference>
<reference key="7">
    <citation type="journal article" date="2002" name="J. Biol. Chem.">
        <title>Molecular mechanisms of bitter and sweet taste transduction.</title>
        <authorList>
            <person name="Margolskee R.F."/>
        </authorList>
    </citation>
    <scope>REVIEW</scope>
</reference>
<reference key="8">
    <citation type="journal article" date="2003" name="Cell">
        <title>Coding of sweet, bitter, and umami tastes: different receptor cells sharing similar signaling pathways.</title>
        <authorList>
            <person name="Zhang Y."/>
            <person name="Hoon M.A."/>
            <person name="Chandrashekar J."/>
            <person name="Mueller K.L."/>
            <person name="Cook B."/>
            <person name="Wu D."/>
            <person name="Zuker C.S."/>
            <person name="Ryba N.J."/>
        </authorList>
    </citation>
    <scope>REVIEW</scope>
</reference>
<proteinExistence type="evidence at protein level"/>
<protein>
    <recommendedName>
        <fullName>Taste receptor type 2 member 9</fullName>
        <shortName>T2R9</shortName>
    </recommendedName>
    <alternativeName>
        <fullName>Taste receptor family B member 6</fullName>
        <shortName>TRB6</shortName>
    </alternativeName>
</protein>
<keyword id="KW-0297">G-protein coupled receptor</keyword>
<keyword id="KW-0325">Glycoprotein</keyword>
<keyword id="KW-0472">Membrane</keyword>
<keyword id="KW-0675">Receptor</keyword>
<keyword id="KW-1185">Reference proteome</keyword>
<keyword id="KW-0716">Sensory transduction</keyword>
<keyword id="KW-0919">Taste</keyword>
<keyword id="KW-0807">Transducer</keyword>
<keyword id="KW-0812">Transmembrane</keyword>
<keyword id="KW-1133">Transmembrane helix</keyword>
<sequence>MPSAIEAIYIILIAGELTIGIWGNGFIVLVNCIDWLKRRDISLIDIILISLAISRICLLCVISLDGFFMLLFPGTYGNSVLVSIVNVVWTFANNSSLWFTSCLSIFYLLKIANISHPFFFWLKLKINKVMLAILLGSFLISLIISVPKNDDMWYHLFKVSHEENITWKFKVSKIPGTFKQLTLNLGVMVPFILCLISFFLLLFSLVRHTKQIRLHATGFRDPSTEAHMRAIKAVIIFLLLLIVYYPVFLVMTSSALIPQGKLVLMIGDIVTVIFPSSHSFILIMGNSKLREAFLKMLRFVKCFLRRRKPFVP</sequence>
<feature type="chain" id="PRO_0000082232" description="Taste receptor type 2 member 9">
    <location>
        <begin position="1"/>
        <end position="312"/>
    </location>
</feature>
<feature type="topological domain" description="Extracellular" evidence="2">
    <location>
        <begin position="1"/>
        <end position="9"/>
    </location>
</feature>
<feature type="transmembrane region" description="Helical; Name=1" evidence="2">
    <location>
        <begin position="10"/>
        <end position="32"/>
    </location>
</feature>
<feature type="topological domain" description="Cytoplasmic" evidence="2">
    <location>
        <begin position="33"/>
        <end position="52"/>
    </location>
</feature>
<feature type="transmembrane region" description="Helical; Name=2" evidence="2">
    <location>
        <begin position="53"/>
        <end position="72"/>
    </location>
</feature>
<feature type="topological domain" description="Extracellular" evidence="2">
    <location>
        <begin position="73"/>
        <end position="86"/>
    </location>
</feature>
<feature type="transmembrane region" description="Helical; Name=3" evidence="2">
    <location>
        <begin position="87"/>
        <end position="109"/>
    </location>
</feature>
<feature type="topological domain" description="Cytoplasmic" evidence="2">
    <location>
        <begin position="110"/>
        <end position="128"/>
    </location>
</feature>
<feature type="transmembrane region" description="Helical; Name=4" evidence="2">
    <location>
        <begin position="129"/>
        <end position="146"/>
    </location>
</feature>
<feature type="topological domain" description="Extracellular" evidence="2">
    <location>
        <begin position="147"/>
        <end position="180"/>
    </location>
</feature>
<feature type="transmembrane region" description="Helical; Name=5" evidence="2">
    <location>
        <begin position="181"/>
        <end position="203"/>
    </location>
</feature>
<feature type="topological domain" description="Cytoplasmic" evidence="2">
    <location>
        <begin position="204"/>
        <end position="234"/>
    </location>
</feature>
<feature type="transmembrane region" description="Helical; Name=6" evidence="2">
    <location>
        <begin position="235"/>
        <end position="257"/>
    </location>
</feature>
<feature type="topological domain" description="Extracellular" evidence="2">
    <location>
        <begin position="258"/>
        <end position="261"/>
    </location>
</feature>
<feature type="transmembrane region" description="Helical; Name=7" evidence="2">
    <location>
        <begin position="262"/>
        <end position="284"/>
    </location>
</feature>
<feature type="topological domain" description="Cytoplasmic" evidence="2">
    <location>
        <begin position="285"/>
        <end position="312"/>
    </location>
</feature>
<feature type="glycosylation site" description="N-linked (GlcNAc...) asparagine" evidence="2">
    <location>
        <position position="164"/>
    </location>
</feature>
<feature type="sequence variant" id="VAR_053345" description="In dbSNP:rs11054043.">
    <original>K</original>
    <variation>Q</variation>
    <location>
        <position position="170"/>
    </location>
</feature>
<feature type="sequence variant" id="VAR_020204" description="In dbSNP:rs3741845." evidence="3 4">
    <original>V</original>
    <variation>A</variation>
    <location>
        <position position="187"/>
    </location>
</feature>
<feature type="sequence variant" id="VAR_053346" description="In dbSNP:rs11054042.">
    <original>L</original>
    <variation>V</variation>
    <location>
        <position position="238"/>
    </location>
</feature>